<comment type="function">
    <text>This is a developmentally regulated putative cell wall protein.</text>
</comment>
<comment type="subcellular location">
    <subcellularLocation>
        <location evidence="2">Secreted</location>
        <location evidence="2">Cell wall</location>
    </subcellularLocation>
</comment>
<comment type="similarity">
    <text evidence="2">Belongs to the plant proline-rich protein superfamily. ENOD12 family.</text>
</comment>
<organism>
    <name type="scientific">Glycine max</name>
    <name type="common">Soybean</name>
    <name type="synonym">Glycine hispida</name>
    <dbReference type="NCBI Taxonomy" id="3847"/>
    <lineage>
        <taxon>Eukaryota</taxon>
        <taxon>Viridiplantae</taxon>
        <taxon>Streptophyta</taxon>
        <taxon>Embryophyta</taxon>
        <taxon>Tracheophyta</taxon>
        <taxon>Spermatophyta</taxon>
        <taxon>Magnoliopsida</taxon>
        <taxon>eudicotyledons</taxon>
        <taxon>Gunneridae</taxon>
        <taxon>Pentapetalae</taxon>
        <taxon>rosids</taxon>
        <taxon>fabids</taxon>
        <taxon>Fabales</taxon>
        <taxon>Fabaceae</taxon>
        <taxon>Papilionoideae</taxon>
        <taxon>50 kb inversion clade</taxon>
        <taxon>NPAAA clade</taxon>
        <taxon>indigoferoid/millettioid clade</taxon>
        <taxon>Phaseoleae</taxon>
        <taxon>Glycine</taxon>
        <taxon>Glycine subgen. Soja</taxon>
    </lineage>
</organism>
<name>PRP1_SOYBN</name>
<protein>
    <recommendedName>
        <fullName>Repetitive proline-rich cell wall protein 1</fullName>
    </recommendedName>
</protein>
<feature type="signal peptide">
    <location>
        <begin position="1"/>
        <end position="26"/>
    </location>
</feature>
<feature type="chain" id="PRO_0000019810" description="Repetitive proline-rich cell wall protein 1">
    <location>
        <begin position="27"/>
        <end position="256"/>
    </location>
</feature>
<feature type="repeat" description="1">
    <location>
        <begin position="31"/>
        <end position="35"/>
    </location>
</feature>
<feature type="repeat" description="2">
    <location>
        <begin position="36"/>
        <end position="40"/>
    </location>
</feature>
<feature type="repeat" description="3">
    <location>
        <begin position="41"/>
        <end position="45"/>
    </location>
</feature>
<feature type="repeat" description="4">
    <location>
        <begin position="46"/>
        <end position="50"/>
    </location>
</feature>
<feature type="repeat" description="5">
    <location>
        <begin position="51"/>
        <end position="55"/>
    </location>
</feature>
<feature type="repeat" description="6">
    <location>
        <begin position="56"/>
        <end position="60"/>
    </location>
</feature>
<feature type="repeat" description="7">
    <location>
        <begin position="61"/>
        <end position="65"/>
    </location>
</feature>
<feature type="repeat" description="8">
    <location>
        <begin position="66"/>
        <end position="70"/>
    </location>
</feature>
<feature type="repeat" description="9">
    <location>
        <begin position="71"/>
        <end position="75"/>
    </location>
</feature>
<feature type="repeat" description="10">
    <location>
        <begin position="76"/>
        <end position="80"/>
    </location>
</feature>
<feature type="repeat" description="11">
    <location>
        <begin position="81"/>
        <end position="85"/>
    </location>
</feature>
<feature type="repeat" description="12">
    <location>
        <begin position="86"/>
        <end position="90"/>
    </location>
</feature>
<feature type="repeat" description="13">
    <location>
        <begin position="91"/>
        <end position="95"/>
    </location>
</feature>
<feature type="repeat" description="14">
    <location>
        <begin position="96"/>
        <end position="100"/>
    </location>
</feature>
<feature type="repeat" description="15">
    <location>
        <begin position="101"/>
        <end position="105"/>
    </location>
</feature>
<feature type="repeat" description="16">
    <location>
        <begin position="106"/>
        <end position="110"/>
    </location>
</feature>
<feature type="repeat" description="17">
    <location>
        <begin position="111"/>
        <end position="115"/>
    </location>
</feature>
<feature type="repeat" description="18">
    <location>
        <begin position="116"/>
        <end position="120"/>
    </location>
</feature>
<feature type="repeat" description="19">
    <location>
        <begin position="121"/>
        <end position="125"/>
    </location>
</feature>
<feature type="repeat" description="20">
    <location>
        <begin position="126"/>
        <end position="130"/>
    </location>
</feature>
<feature type="repeat" description="21">
    <location>
        <begin position="131"/>
        <end position="135"/>
    </location>
</feature>
<feature type="repeat" description="22">
    <location>
        <begin position="136"/>
        <end position="140"/>
    </location>
</feature>
<feature type="repeat" description="23">
    <location>
        <begin position="141"/>
        <end position="145"/>
    </location>
</feature>
<feature type="repeat" description="24">
    <location>
        <begin position="146"/>
        <end position="150"/>
    </location>
</feature>
<feature type="repeat" description="25">
    <location>
        <begin position="151"/>
        <end position="155"/>
    </location>
</feature>
<feature type="repeat" description="26">
    <location>
        <begin position="156"/>
        <end position="160"/>
    </location>
</feature>
<feature type="repeat" description="27">
    <location>
        <begin position="161"/>
        <end position="165"/>
    </location>
</feature>
<feature type="repeat" description="28">
    <location>
        <begin position="166"/>
        <end position="170"/>
    </location>
</feature>
<feature type="repeat" description="29">
    <location>
        <begin position="171"/>
        <end position="175"/>
    </location>
</feature>
<feature type="repeat" description="30">
    <location>
        <begin position="176"/>
        <end position="180"/>
    </location>
</feature>
<feature type="repeat" description="31">
    <location>
        <begin position="181"/>
        <end position="185"/>
    </location>
</feature>
<feature type="repeat" description="32">
    <location>
        <begin position="186"/>
        <end position="190"/>
    </location>
</feature>
<feature type="repeat" description="33">
    <location>
        <begin position="191"/>
        <end position="195"/>
    </location>
</feature>
<feature type="repeat" description="34">
    <location>
        <begin position="196"/>
        <end position="200"/>
    </location>
</feature>
<feature type="repeat" description="35">
    <location>
        <begin position="201"/>
        <end position="205"/>
    </location>
</feature>
<feature type="repeat" description="36">
    <location>
        <begin position="206"/>
        <end position="210"/>
    </location>
</feature>
<feature type="repeat" description="37">
    <location>
        <begin position="211"/>
        <end position="215"/>
    </location>
</feature>
<feature type="repeat" description="38">
    <location>
        <begin position="216"/>
        <end position="220"/>
    </location>
</feature>
<feature type="repeat" description="39">
    <location>
        <begin position="221"/>
        <end position="225"/>
    </location>
</feature>
<feature type="repeat" description="40">
    <location>
        <begin position="226"/>
        <end position="230"/>
    </location>
</feature>
<feature type="repeat" description="41">
    <location>
        <begin position="231"/>
        <end position="235"/>
    </location>
</feature>
<feature type="repeat" description="42">
    <location>
        <begin position="236"/>
        <end position="240"/>
    </location>
</feature>
<feature type="repeat" description="43">
    <location>
        <begin position="241"/>
        <end position="245"/>
    </location>
</feature>
<feature type="repeat" description="44">
    <location>
        <begin position="246"/>
        <end position="250"/>
    </location>
</feature>
<feature type="region of interest" description="44 X 5 AA tandem repeats of P-P-[VIY]-[EYKP]-[KT]">
    <location>
        <begin position="31"/>
        <end position="250"/>
    </location>
</feature>
<feature type="region of interest" description="Disordered" evidence="1">
    <location>
        <begin position="233"/>
        <end position="256"/>
    </location>
</feature>
<sequence>MRNMASLSSSLVLLLAALILSPQVLADYEKPPIYKPPVYTPPVYKPPVEKPPVYKPPVYKPPVEKPPVYKPPVYKPPIYKPPVYKPPVEKPPVYKPPVYKPPVYKPPVYKPPIEKPPVYKPPVYKPPVYKPPVYKPPVYKPPVYKPPVEKPPVYKPPVYKPPVYKPPVYKPPVEKPPVYKPPVYKPPVYKPPVYKPPVEKPPIYKPPVYKPPIEKPPVYKPPVYKPPVYKPPVYKPPVKKPPIYKPPYPKYPPGSN</sequence>
<proteinExistence type="inferred from homology"/>
<gene>
    <name type="primary">PRP1</name>
</gene>
<accession>P08012</accession>
<reference key="1">
    <citation type="journal article" date="1987" name="J. Biol. Chem.">
        <title>Characterization and sequence analysis of a developmentally regulated putative cell wall protein gene isolated from soybean.</title>
        <authorList>
            <person name="Hong J.C."/>
            <person name="Nagao R.T."/>
            <person name="Key J.L."/>
        </authorList>
    </citation>
    <scope>NUCLEOTIDE SEQUENCE [GENOMIC DNA]</scope>
</reference>
<dbReference type="EMBL" id="J02746">
    <property type="protein sequence ID" value="AAA66287.1"/>
    <property type="molecule type" value="Genomic_DNA"/>
</dbReference>
<dbReference type="PIR" id="A29324">
    <property type="entry name" value="A29324"/>
</dbReference>
<dbReference type="PIR" id="A31369">
    <property type="entry name" value="A31369"/>
</dbReference>
<dbReference type="RefSeq" id="NP_001347263.1">
    <property type="nucleotide sequence ID" value="NM_001360334.1"/>
</dbReference>
<dbReference type="RefSeq" id="XP_003533862.1">
    <property type="nucleotide sequence ID" value="XM_003533814.3"/>
</dbReference>
<dbReference type="STRING" id="3847.P08012"/>
<dbReference type="PaxDb" id="3847-GLYMA09G12198.1"/>
<dbReference type="EnsemblPlants" id="KRH37832">
    <property type="protein sequence ID" value="KRH37832"/>
    <property type="gene ID" value="GLYMA_09G092700"/>
</dbReference>
<dbReference type="GeneID" id="100795066"/>
<dbReference type="Gramene" id="KRH37832">
    <property type="protein sequence ID" value="KRH37832"/>
    <property type="gene ID" value="GLYMA_09G092700"/>
</dbReference>
<dbReference type="eggNOG" id="ENOG502S0UH">
    <property type="taxonomic scope" value="Eukaryota"/>
</dbReference>
<dbReference type="HOGENOM" id="CLU_109580_0_0_1"/>
<dbReference type="InParanoid" id="P08012"/>
<dbReference type="OMA" id="YHPPVCH"/>
<dbReference type="Proteomes" id="UP000008827">
    <property type="component" value="Chromosome 9"/>
</dbReference>
<dbReference type="GO" id="GO:0005576">
    <property type="term" value="C:extracellular region"/>
    <property type="evidence" value="ECO:0007669"/>
    <property type="project" value="UniProtKB-KW"/>
</dbReference>
<dbReference type="GO" id="GO:0005199">
    <property type="term" value="F:structural constituent of cell wall"/>
    <property type="evidence" value="ECO:0007669"/>
    <property type="project" value="InterPro"/>
</dbReference>
<dbReference type="InterPro" id="IPR002964">
    <property type="entry name" value="Adhesive_plaq"/>
</dbReference>
<dbReference type="InterPro" id="IPR003883">
    <property type="entry name" value="Extensin-like"/>
</dbReference>
<dbReference type="InterPro" id="IPR051308">
    <property type="entry name" value="Proline-rich_CW_protein"/>
</dbReference>
<dbReference type="PANTHER" id="PTHR34629">
    <property type="entry name" value="PROLINE-RICH EXTENSIN-LIKE PROTEIN EPR1"/>
    <property type="match status" value="1"/>
</dbReference>
<dbReference type="PANTHER" id="PTHR34629:SF4">
    <property type="entry name" value="REPETITIVE PROLINE-RICH CELL WALL PROTEIN 3"/>
    <property type="match status" value="1"/>
</dbReference>
<dbReference type="Pfam" id="PF02095">
    <property type="entry name" value="Extensin_1"/>
    <property type="match status" value="2"/>
</dbReference>
<dbReference type="PRINTS" id="PR01216">
    <property type="entry name" value="ADHESIVEI"/>
</dbReference>
<evidence type="ECO:0000256" key="1">
    <source>
        <dbReference type="SAM" id="MobiDB-lite"/>
    </source>
</evidence>
<evidence type="ECO:0000305" key="2"/>
<keyword id="KW-0134">Cell wall</keyword>
<keyword id="KW-0217">Developmental protein</keyword>
<keyword id="KW-1185">Reference proteome</keyword>
<keyword id="KW-0677">Repeat</keyword>
<keyword id="KW-0964">Secreted</keyword>
<keyword id="KW-0732">Signal</keyword>